<feature type="chain" id="PRO_1000215384" description="UPF0342 protein SZO_10960">
    <location>
        <begin position="1"/>
        <end position="113"/>
    </location>
</feature>
<dbReference type="EMBL" id="FM204884">
    <property type="protein sequence ID" value="CAW99488.1"/>
    <property type="molecule type" value="Genomic_DNA"/>
</dbReference>
<dbReference type="SMR" id="C0MGL2"/>
<dbReference type="KEGG" id="seq:SZO_10960"/>
<dbReference type="eggNOG" id="COG3679">
    <property type="taxonomic scope" value="Bacteria"/>
</dbReference>
<dbReference type="HOGENOM" id="CLU_140243_2_0_9"/>
<dbReference type="Proteomes" id="UP000001368">
    <property type="component" value="Chromosome"/>
</dbReference>
<dbReference type="Gene3D" id="1.20.1500.10">
    <property type="entry name" value="YheA/YmcA-like"/>
    <property type="match status" value="1"/>
</dbReference>
<dbReference type="HAMAP" id="MF_01526">
    <property type="entry name" value="UPF0342"/>
    <property type="match status" value="1"/>
</dbReference>
<dbReference type="InterPro" id="IPR010368">
    <property type="entry name" value="Com_YlbF"/>
</dbReference>
<dbReference type="InterPro" id="IPR023378">
    <property type="entry name" value="YheA/YmcA-like_dom_sf"/>
</dbReference>
<dbReference type="NCBIfam" id="NF010209">
    <property type="entry name" value="PRK13676.1-1"/>
    <property type="match status" value="1"/>
</dbReference>
<dbReference type="Pfam" id="PF06133">
    <property type="entry name" value="Com_YlbF"/>
    <property type="match status" value="1"/>
</dbReference>
<dbReference type="SUPFAM" id="SSF158622">
    <property type="entry name" value="YheA/YmcA-like"/>
    <property type="match status" value="1"/>
</dbReference>
<protein>
    <recommendedName>
        <fullName evidence="1">UPF0342 protein SZO_10960</fullName>
    </recommendedName>
</protein>
<evidence type="ECO:0000255" key="1">
    <source>
        <dbReference type="HAMAP-Rule" id="MF_01526"/>
    </source>
</evidence>
<reference key="1">
    <citation type="journal article" date="2009" name="PLoS Pathog.">
        <title>Genomic evidence for the evolution of Streptococcus equi: host restriction, increased virulence, and genetic exchange with human pathogens.</title>
        <authorList>
            <person name="Holden M.T.G."/>
            <person name="Heather Z."/>
            <person name="Paillot R."/>
            <person name="Steward K.F."/>
            <person name="Webb K."/>
            <person name="Ainslie F."/>
            <person name="Jourdan T."/>
            <person name="Bason N.C."/>
            <person name="Holroyd N.E."/>
            <person name="Mungall K."/>
            <person name="Quail M.A."/>
            <person name="Sanders M."/>
            <person name="Simmonds M."/>
            <person name="Willey D."/>
            <person name="Brooks K."/>
            <person name="Aanensen D.M."/>
            <person name="Spratt B.G."/>
            <person name="Jolley K.A."/>
            <person name="Maiden M.C.J."/>
            <person name="Kehoe M."/>
            <person name="Chanter N."/>
            <person name="Bentley S.D."/>
            <person name="Robinson C."/>
            <person name="Maskell D.J."/>
            <person name="Parkhill J."/>
            <person name="Waller A.S."/>
        </authorList>
    </citation>
    <scope>NUCLEOTIDE SEQUENCE [LARGE SCALE GENOMIC DNA]</scope>
    <source>
        <strain>H70</strain>
    </source>
</reference>
<proteinExistence type="inferred from homology"/>
<gene>
    <name type="ordered locus">SZO_10960</name>
</gene>
<name>Y1096_STRS7</name>
<comment type="similarity">
    <text evidence="1">Belongs to the UPF0342 family.</text>
</comment>
<organism>
    <name type="scientific">Streptococcus equi subsp. zooepidemicus (strain H70)</name>
    <dbReference type="NCBI Taxonomy" id="553483"/>
    <lineage>
        <taxon>Bacteria</taxon>
        <taxon>Bacillati</taxon>
        <taxon>Bacillota</taxon>
        <taxon>Bacilli</taxon>
        <taxon>Lactobacillales</taxon>
        <taxon>Streptococcaceae</taxon>
        <taxon>Streptococcus</taxon>
    </lineage>
</organism>
<accession>C0MGL2</accession>
<sequence length="113" mass="12838">MSQDIYDYANKLERAVRALPEYRKALEAREEIKADEAASQLFDEFVAVQEKLQGLMQTGQLPTETEQADIQALSQKIEANDLLKGYFNAQQALSIYVNDIERIVFAPLKDLAK</sequence>